<name>RSMH_ALBFT</name>
<keyword id="KW-0963">Cytoplasm</keyword>
<keyword id="KW-0489">Methyltransferase</keyword>
<keyword id="KW-1185">Reference proteome</keyword>
<keyword id="KW-0698">rRNA processing</keyword>
<keyword id="KW-0949">S-adenosyl-L-methionine</keyword>
<keyword id="KW-0808">Transferase</keyword>
<reference key="1">
    <citation type="submission" date="2006-02" db="EMBL/GenBank/DDBJ databases">
        <title>Complete sequence of chromosome of Rhodoferax ferrireducens DSM 15236.</title>
        <authorList>
            <person name="Copeland A."/>
            <person name="Lucas S."/>
            <person name="Lapidus A."/>
            <person name="Barry K."/>
            <person name="Detter J.C."/>
            <person name="Glavina del Rio T."/>
            <person name="Hammon N."/>
            <person name="Israni S."/>
            <person name="Pitluck S."/>
            <person name="Brettin T."/>
            <person name="Bruce D."/>
            <person name="Han C."/>
            <person name="Tapia R."/>
            <person name="Gilna P."/>
            <person name="Kiss H."/>
            <person name="Schmutz J."/>
            <person name="Larimer F."/>
            <person name="Land M."/>
            <person name="Kyrpides N."/>
            <person name="Ivanova N."/>
            <person name="Richardson P."/>
        </authorList>
    </citation>
    <scope>NUCLEOTIDE SEQUENCE [LARGE SCALE GENOMIC DNA]</scope>
    <source>
        <strain>ATCC BAA-621 / DSM 15236 / T118</strain>
    </source>
</reference>
<protein>
    <recommendedName>
        <fullName evidence="1">Ribosomal RNA small subunit methyltransferase H</fullName>
        <ecNumber evidence="1">2.1.1.199</ecNumber>
    </recommendedName>
    <alternativeName>
        <fullName evidence="1">16S rRNA m(4)C1402 methyltransferase</fullName>
    </alternativeName>
    <alternativeName>
        <fullName evidence="1">rRNA (cytosine-N(4)-)-methyltransferase RsmH</fullName>
    </alternativeName>
</protein>
<accession>Q21SW1</accession>
<proteinExistence type="inferred from homology"/>
<sequence length="309" mass="33752">MTHTTVLLNEAVDALFCNPDATADASATGAQVYVDATFGRGGHSRLILSRMTPTDRLIAFDKDAEALVEAGNIHDSRFSIRHQGFSHLDELPPASVAGVLLDLGISSPQIDNPARGFSFRFEGPLDMRMDTTRGISVAQWLANAETEKIAEVIRDYGEERFAGPIAKAIVARRQERGPISSTTELAQLVADTVKTREPGQNPATRTFQAFRIFINAELEELQQALAASLLVLAPGGRLVVISFHSLEDRIVKQFIAQHSRDVYDRRAPFAPPKVMQLKALARLRPSAAEVSANPRARSAIMRVAQRTAS</sequence>
<organism>
    <name type="scientific">Albidiferax ferrireducens (strain ATCC BAA-621 / DSM 15236 / T118)</name>
    <name type="common">Rhodoferax ferrireducens</name>
    <dbReference type="NCBI Taxonomy" id="338969"/>
    <lineage>
        <taxon>Bacteria</taxon>
        <taxon>Pseudomonadati</taxon>
        <taxon>Pseudomonadota</taxon>
        <taxon>Betaproteobacteria</taxon>
        <taxon>Burkholderiales</taxon>
        <taxon>Comamonadaceae</taxon>
        <taxon>Rhodoferax</taxon>
    </lineage>
</organism>
<feature type="chain" id="PRO_0000387079" description="Ribosomal RNA small subunit methyltransferase H">
    <location>
        <begin position="1"/>
        <end position="309"/>
    </location>
</feature>
<feature type="binding site" evidence="1">
    <location>
        <begin position="41"/>
        <end position="43"/>
    </location>
    <ligand>
        <name>S-adenosyl-L-methionine</name>
        <dbReference type="ChEBI" id="CHEBI:59789"/>
    </ligand>
</feature>
<feature type="binding site" evidence="1">
    <location>
        <position position="61"/>
    </location>
    <ligand>
        <name>S-adenosyl-L-methionine</name>
        <dbReference type="ChEBI" id="CHEBI:59789"/>
    </ligand>
</feature>
<feature type="binding site" evidence="1">
    <location>
        <position position="85"/>
    </location>
    <ligand>
        <name>S-adenosyl-L-methionine</name>
        <dbReference type="ChEBI" id="CHEBI:59789"/>
    </ligand>
</feature>
<feature type="binding site" evidence="1">
    <location>
        <position position="102"/>
    </location>
    <ligand>
        <name>S-adenosyl-L-methionine</name>
        <dbReference type="ChEBI" id="CHEBI:59789"/>
    </ligand>
</feature>
<feature type="binding site" evidence="1">
    <location>
        <position position="109"/>
    </location>
    <ligand>
        <name>S-adenosyl-L-methionine</name>
        <dbReference type="ChEBI" id="CHEBI:59789"/>
    </ligand>
</feature>
<dbReference type="EC" id="2.1.1.199" evidence="1"/>
<dbReference type="EMBL" id="CP000267">
    <property type="protein sequence ID" value="ABD71142.1"/>
    <property type="molecule type" value="Genomic_DNA"/>
</dbReference>
<dbReference type="SMR" id="Q21SW1"/>
<dbReference type="STRING" id="338969.Rfer_3433"/>
<dbReference type="KEGG" id="rfr:Rfer_3433"/>
<dbReference type="eggNOG" id="COG0275">
    <property type="taxonomic scope" value="Bacteria"/>
</dbReference>
<dbReference type="HOGENOM" id="CLU_038422_2_0_4"/>
<dbReference type="Proteomes" id="UP000008332">
    <property type="component" value="Chromosome"/>
</dbReference>
<dbReference type="GO" id="GO:0005737">
    <property type="term" value="C:cytoplasm"/>
    <property type="evidence" value="ECO:0007669"/>
    <property type="project" value="UniProtKB-SubCell"/>
</dbReference>
<dbReference type="GO" id="GO:0071424">
    <property type="term" value="F:rRNA (cytosine-N4-)-methyltransferase activity"/>
    <property type="evidence" value="ECO:0007669"/>
    <property type="project" value="UniProtKB-UniRule"/>
</dbReference>
<dbReference type="GO" id="GO:0070475">
    <property type="term" value="P:rRNA base methylation"/>
    <property type="evidence" value="ECO:0007669"/>
    <property type="project" value="UniProtKB-UniRule"/>
</dbReference>
<dbReference type="Gene3D" id="1.10.150.170">
    <property type="entry name" value="Putative methyltransferase TM0872, insert domain"/>
    <property type="match status" value="1"/>
</dbReference>
<dbReference type="Gene3D" id="3.40.50.150">
    <property type="entry name" value="Vaccinia Virus protein VP39"/>
    <property type="match status" value="1"/>
</dbReference>
<dbReference type="HAMAP" id="MF_01007">
    <property type="entry name" value="16SrRNA_methyltr_H"/>
    <property type="match status" value="1"/>
</dbReference>
<dbReference type="InterPro" id="IPR002903">
    <property type="entry name" value="RsmH"/>
</dbReference>
<dbReference type="InterPro" id="IPR023397">
    <property type="entry name" value="SAM-dep_MeTrfase_MraW_recog"/>
</dbReference>
<dbReference type="InterPro" id="IPR029063">
    <property type="entry name" value="SAM-dependent_MTases_sf"/>
</dbReference>
<dbReference type="NCBIfam" id="TIGR00006">
    <property type="entry name" value="16S rRNA (cytosine(1402)-N(4))-methyltransferase RsmH"/>
    <property type="match status" value="1"/>
</dbReference>
<dbReference type="PANTHER" id="PTHR11265:SF0">
    <property type="entry name" value="12S RRNA N4-METHYLCYTIDINE METHYLTRANSFERASE"/>
    <property type="match status" value="1"/>
</dbReference>
<dbReference type="PANTHER" id="PTHR11265">
    <property type="entry name" value="S-ADENOSYL-METHYLTRANSFERASE MRAW"/>
    <property type="match status" value="1"/>
</dbReference>
<dbReference type="Pfam" id="PF01795">
    <property type="entry name" value="Methyltransf_5"/>
    <property type="match status" value="1"/>
</dbReference>
<dbReference type="PIRSF" id="PIRSF004486">
    <property type="entry name" value="MraW"/>
    <property type="match status" value="1"/>
</dbReference>
<dbReference type="SUPFAM" id="SSF81799">
    <property type="entry name" value="Putative methyltransferase TM0872, insert domain"/>
    <property type="match status" value="1"/>
</dbReference>
<dbReference type="SUPFAM" id="SSF53335">
    <property type="entry name" value="S-adenosyl-L-methionine-dependent methyltransferases"/>
    <property type="match status" value="1"/>
</dbReference>
<evidence type="ECO:0000255" key="1">
    <source>
        <dbReference type="HAMAP-Rule" id="MF_01007"/>
    </source>
</evidence>
<gene>
    <name evidence="1" type="primary">rsmH</name>
    <name type="synonym">mraW</name>
    <name type="ordered locus">Rfer_3433</name>
</gene>
<comment type="function">
    <text evidence="1">Specifically methylates the N4 position of cytidine in position 1402 (C1402) of 16S rRNA.</text>
</comment>
<comment type="catalytic activity">
    <reaction evidence="1">
        <text>cytidine(1402) in 16S rRNA + S-adenosyl-L-methionine = N(4)-methylcytidine(1402) in 16S rRNA + S-adenosyl-L-homocysteine + H(+)</text>
        <dbReference type="Rhea" id="RHEA:42928"/>
        <dbReference type="Rhea" id="RHEA-COMP:10286"/>
        <dbReference type="Rhea" id="RHEA-COMP:10287"/>
        <dbReference type="ChEBI" id="CHEBI:15378"/>
        <dbReference type="ChEBI" id="CHEBI:57856"/>
        <dbReference type="ChEBI" id="CHEBI:59789"/>
        <dbReference type="ChEBI" id="CHEBI:74506"/>
        <dbReference type="ChEBI" id="CHEBI:82748"/>
        <dbReference type="EC" id="2.1.1.199"/>
    </reaction>
</comment>
<comment type="subcellular location">
    <subcellularLocation>
        <location evidence="1">Cytoplasm</location>
    </subcellularLocation>
</comment>
<comment type="similarity">
    <text evidence="1">Belongs to the methyltransferase superfamily. RsmH family.</text>
</comment>